<comment type="function">
    <text evidence="1">Efflux system for nickel and cobalt.</text>
</comment>
<comment type="subcellular location">
    <subcellularLocation>
        <location evidence="1">Cell inner membrane</location>
        <topology evidence="1">Multi-pass membrane protein</topology>
    </subcellularLocation>
</comment>
<comment type="induction">
    <text evidence="1">By nickel and cobalt. Transcriptionally repressed by RcnR (By similarity).</text>
</comment>
<comment type="similarity">
    <text evidence="4">Belongs to the NiCoT transporter (TC 2.A.52) family. RcnA subfamily.</text>
</comment>
<name>RCNA_ECOHS</name>
<gene>
    <name type="primary">rcnA</name>
    <name type="ordered locus">EcHS_A2242</name>
</gene>
<sequence>MTEFTTLLQQGNAWFFIPSVILLGALHGLEPGHSKTMMAAFIIAIKGTIKQAVMLGLAATISHTAVVWLIAFGGMVISKRFTAQSAEPWLQLISAVIIISTAFWMFWRTWRGERNWLENMHGHDYEHHHHDHEHHHDHGHHHHHEHGEYQDAHARAHANDIKRRFDGREVTNWQILLFGLTGGLIPCPAAITVLLICIQLKALTLGATLVVSFSIGLALTLVTVGVGAAISVQQVAKRWSGFNTLAKRAPYFSSLLIGLVGVYMGVHGFMGIMR</sequence>
<accession>A8A1X1</accession>
<proteinExistence type="inferred from homology"/>
<protein>
    <recommendedName>
        <fullName>Nickel/cobalt efflux system RcnA</fullName>
    </recommendedName>
</protein>
<dbReference type="EMBL" id="CP000802">
    <property type="protein sequence ID" value="ABV06525.1"/>
    <property type="molecule type" value="Genomic_DNA"/>
</dbReference>
<dbReference type="RefSeq" id="WP_000134650.1">
    <property type="nucleotide sequence ID" value="NC_009800.1"/>
</dbReference>
<dbReference type="KEGG" id="ecx:EcHS_A2242"/>
<dbReference type="HOGENOM" id="CLU_058605_2_0_6"/>
<dbReference type="GO" id="GO:0005886">
    <property type="term" value="C:plasma membrane"/>
    <property type="evidence" value="ECO:0007669"/>
    <property type="project" value="UniProtKB-SubCell"/>
</dbReference>
<dbReference type="GO" id="GO:0046583">
    <property type="term" value="F:monoatomic cation efflux transmembrane transporter activity"/>
    <property type="evidence" value="ECO:0007669"/>
    <property type="project" value="TreeGrafter"/>
</dbReference>
<dbReference type="GO" id="GO:0015099">
    <property type="term" value="F:nickel cation transmembrane transporter activity"/>
    <property type="evidence" value="ECO:0007669"/>
    <property type="project" value="InterPro"/>
</dbReference>
<dbReference type="GO" id="GO:0006824">
    <property type="term" value="P:cobalt ion transport"/>
    <property type="evidence" value="ECO:0007669"/>
    <property type="project" value="UniProtKB-KW"/>
</dbReference>
<dbReference type="GO" id="GO:0032025">
    <property type="term" value="P:response to cobalt ion"/>
    <property type="evidence" value="ECO:0007669"/>
    <property type="project" value="TreeGrafter"/>
</dbReference>
<dbReference type="GO" id="GO:0010045">
    <property type="term" value="P:response to nickel cation"/>
    <property type="evidence" value="ECO:0007669"/>
    <property type="project" value="TreeGrafter"/>
</dbReference>
<dbReference type="Gene3D" id="3.40.50.1980">
    <property type="entry name" value="Nitrogenase molybdenum iron protein domain"/>
    <property type="match status" value="1"/>
</dbReference>
<dbReference type="InterPro" id="IPR011541">
    <property type="entry name" value="Ni/Co_transpt_high_affinity"/>
</dbReference>
<dbReference type="InterPro" id="IPR051224">
    <property type="entry name" value="NiCoT_RcnA"/>
</dbReference>
<dbReference type="NCBIfam" id="NF007454">
    <property type="entry name" value="PRK10019.1"/>
    <property type="match status" value="1"/>
</dbReference>
<dbReference type="PANTHER" id="PTHR40659">
    <property type="entry name" value="NICKEL/COBALT EFFLUX SYSTEM RCNA"/>
    <property type="match status" value="1"/>
</dbReference>
<dbReference type="PANTHER" id="PTHR40659:SF1">
    <property type="entry name" value="NICKEL_COBALT EFFLUX SYSTEM RCNA"/>
    <property type="match status" value="1"/>
</dbReference>
<dbReference type="Pfam" id="PF03824">
    <property type="entry name" value="NicO"/>
    <property type="match status" value="1"/>
</dbReference>
<keyword id="KW-0997">Cell inner membrane</keyword>
<keyword id="KW-1003">Cell membrane</keyword>
<keyword id="KW-0170">Cobalt</keyword>
<keyword id="KW-0171">Cobalt transport</keyword>
<keyword id="KW-0406">Ion transport</keyword>
<keyword id="KW-0472">Membrane</keyword>
<keyword id="KW-0533">Nickel</keyword>
<keyword id="KW-0921">Nickel transport</keyword>
<keyword id="KW-0812">Transmembrane</keyword>
<keyword id="KW-1133">Transmembrane helix</keyword>
<keyword id="KW-0813">Transport</keyword>
<organism>
    <name type="scientific">Escherichia coli O9:H4 (strain HS)</name>
    <dbReference type="NCBI Taxonomy" id="331112"/>
    <lineage>
        <taxon>Bacteria</taxon>
        <taxon>Pseudomonadati</taxon>
        <taxon>Pseudomonadota</taxon>
        <taxon>Gammaproteobacteria</taxon>
        <taxon>Enterobacterales</taxon>
        <taxon>Enterobacteriaceae</taxon>
        <taxon>Escherichia</taxon>
    </lineage>
</organism>
<reference key="1">
    <citation type="journal article" date="2008" name="J. Bacteriol.">
        <title>The pangenome structure of Escherichia coli: comparative genomic analysis of E. coli commensal and pathogenic isolates.</title>
        <authorList>
            <person name="Rasko D.A."/>
            <person name="Rosovitz M.J."/>
            <person name="Myers G.S.A."/>
            <person name="Mongodin E.F."/>
            <person name="Fricke W.F."/>
            <person name="Gajer P."/>
            <person name="Crabtree J."/>
            <person name="Sebaihia M."/>
            <person name="Thomson N.R."/>
            <person name="Chaudhuri R."/>
            <person name="Henderson I.R."/>
            <person name="Sperandio V."/>
            <person name="Ravel J."/>
        </authorList>
    </citation>
    <scope>NUCLEOTIDE SEQUENCE [LARGE SCALE GENOMIC DNA]</scope>
    <source>
        <strain>HS</strain>
    </source>
</reference>
<feature type="chain" id="PRO_0000333786" description="Nickel/cobalt efflux system RcnA">
    <location>
        <begin position="1"/>
        <end position="274"/>
    </location>
</feature>
<feature type="topological domain" description="Periplasmic" evidence="2">
    <location>
        <begin position="1"/>
        <end position="12"/>
    </location>
</feature>
<feature type="transmembrane region" description="Helical" evidence="2">
    <location>
        <begin position="13"/>
        <end position="33"/>
    </location>
</feature>
<feature type="topological domain" description="Cytoplasmic" evidence="2">
    <location>
        <begin position="34"/>
        <end position="56"/>
    </location>
</feature>
<feature type="transmembrane region" description="Helical" evidence="2">
    <location>
        <begin position="57"/>
        <end position="77"/>
    </location>
</feature>
<feature type="topological domain" description="Periplasmic" evidence="2">
    <location>
        <begin position="78"/>
        <end position="86"/>
    </location>
</feature>
<feature type="transmembrane region" description="Helical" evidence="2">
    <location>
        <begin position="87"/>
        <end position="107"/>
    </location>
</feature>
<feature type="topological domain" description="Cytoplasmic" evidence="2">
    <location>
        <begin position="108"/>
        <end position="174"/>
    </location>
</feature>
<feature type="transmembrane region" description="Helical" evidence="2">
    <location>
        <begin position="175"/>
        <end position="195"/>
    </location>
</feature>
<feature type="topological domain" description="Periplasmic" evidence="2">
    <location>
        <begin position="196"/>
        <end position="209"/>
    </location>
</feature>
<feature type="transmembrane region" description="Helical" evidence="2">
    <location>
        <begin position="210"/>
        <end position="230"/>
    </location>
</feature>
<feature type="topological domain" description="Cytoplasmic" evidence="2">
    <location>
        <begin position="231"/>
        <end position="251"/>
    </location>
</feature>
<feature type="transmembrane region" description="Helical" evidence="2">
    <location>
        <begin position="252"/>
        <end position="272"/>
    </location>
</feature>
<feature type="topological domain" description="Periplasmic" evidence="2">
    <location>
        <begin position="273"/>
        <end position="274"/>
    </location>
</feature>
<feature type="region of interest" description="Disordered" evidence="3">
    <location>
        <begin position="127"/>
        <end position="153"/>
    </location>
</feature>
<feature type="compositionally biased region" description="Basic residues" evidence="3">
    <location>
        <begin position="129"/>
        <end position="144"/>
    </location>
</feature>
<evidence type="ECO:0000250" key="1"/>
<evidence type="ECO:0000255" key="2"/>
<evidence type="ECO:0000256" key="3">
    <source>
        <dbReference type="SAM" id="MobiDB-lite"/>
    </source>
</evidence>
<evidence type="ECO:0000305" key="4"/>